<evidence type="ECO:0000250" key="1"/>
<evidence type="ECO:0000255" key="2"/>
<evidence type="ECO:0000255" key="3">
    <source>
        <dbReference type="PROSITE-ProRule" id="PRU00076"/>
    </source>
</evidence>
<evidence type="ECO:0000256" key="4">
    <source>
        <dbReference type="SAM" id="MobiDB-lite"/>
    </source>
</evidence>
<evidence type="ECO:0000269" key="5">
    <source>
    </source>
</evidence>
<evidence type="ECO:0000269" key="6">
    <source>
    </source>
</evidence>
<keyword id="KW-1003">Cell membrane</keyword>
<keyword id="KW-1015">Disulfide bond</keyword>
<keyword id="KW-0245">EGF-like domain</keyword>
<keyword id="KW-0339">Growth factor</keyword>
<keyword id="KW-0358">Heparin-binding</keyword>
<keyword id="KW-0472">Membrane</keyword>
<keyword id="KW-0675">Receptor</keyword>
<keyword id="KW-1185">Reference proteome</keyword>
<keyword id="KW-0964">Secreted</keyword>
<keyword id="KW-0732">Signal</keyword>
<keyword id="KW-0812">Transmembrane</keyword>
<keyword id="KW-1133">Transmembrane helix</keyword>
<accession>Q9W7C5</accession>
<gene>
    <name type="primary">HBEGF</name>
    <name type="synonym">HEGFL</name>
</gene>
<protein>
    <recommendedName>
        <fullName>Proheparin-binding EGF-like growth factor</fullName>
    </recommendedName>
    <component>
        <recommendedName>
            <fullName>Heparin-binding EGF-like growth factor</fullName>
            <shortName>HB-EGF</shortName>
            <shortName>HBEGF</shortName>
        </recommendedName>
    </component>
</protein>
<organism>
    <name type="scientific">Gallus gallus</name>
    <name type="common">Chicken</name>
    <dbReference type="NCBI Taxonomy" id="9031"/>
    <lineage>
        <taxon>Eukaryota</taxon>
        <taxon>Metazoa</taxon>
        <taxon>Chordata</taxon>
        <taxon>Craniata</taxon>
        <taxon>Vertebrata</taxon>
        <taxon>Euteleostomi</taxon>
        <taxon>Archelosauria</taxon>
        <taxon>Archosauria</taxon>
        <taxon>Dinosauria</taxon>
        <taxon>Saurischia</taxon>
        <taxon>Theropoda</taxon>
        <taxon>Coelurosauria</taxon>
        <taxon>Aves</taxon>
        <taxon>Neognathae</taxon>
        <taxon>Galloanserae</taxon>
        <taxon>Galliformes</taxon>
        <taxon>Phasianidae</taxon>
        <taxon>Phasianinae</taxon>
        <taxon>Gallus</taxon>
    </lineage>
</organism>
<dbReference type="EMBL" id="AF131224">
    <property type="protein sequence ID" value="AAD29416.1"/>
    <property type="molecule type" value="mRNA"/>
</dbReference>
<dbReference type="RefSeq" id="NP_990180.1">
    <property type="nucleotide sequence ID" value="NM_204849.2"/>
</dbReference>
<dbReference type="SMR" id="Q9W7C5"/>
<dbReference type="BioGRID" id="675932">
    <property type="interactions" value="1"/>
</dbReference>
<dbReference type="FunCoup" id="Q9W7C5">
    <property type="interactions" value="568"/>
</dbReference>
<dbReference type="STRING" id="9031.ENSGALP00000001399"/>
<dbReference type="PaxDb" id="9031-ENSGALP00000001399"/>
<dbReference type="Ensembl" id="ENSGALT00010020605.1">
    <property type="protein sequence ID" value="ENSGALP00010011929.1"/>
    <property type="gene ID" value="ENSGALG00010008688.1"/>
</dbReference>
<dbReference type="GeneID" id="395654"/>
<dbReference type="KEGG" id="gga:395654"/>
<dbReference type="CTD" id="1839"/>
<dbReference type="VEuPathDB" id="HostDB:geneid_395654"/>
<dbReference type="eggNOG" id="ENOG502S0ZP">
    <property type="taxonomic scope" value="Eukaryota"/>
</dbReference>
<dbReference type="GeneTree" id="ENSGT00940000156901"/>
<dbReference type="HOGENOM" id="CLU_096527_2_0_1"/>
<dbReference type="InParanoid" id="Q9W7C5"/>
<dbReference type="OMA" id="PSCICQE"/>
<dbReference type="OrthoDB" id="8780145at2759"/>
<dbReference type="PhylomeDB" id="Q9W7C5"/>
<dbReference type="TreeFam" id="TF332773"/>
<dbReference type="Reactome" id="R-GGA-1227986">
    <property type="pathway name" value="Signaling by ERBB2"/>
</dbReference>
<dbReference type="Reactome" id="R-GGA-1236394">
    <property type="pathway name" value="Signaling by ERBB4"/>
</dbReference>
<dbReference type="Reactome" id="R-GGA-1250196">
    <property type="pathway name" value="SHC1 events in ERBB2 signaling"/>
</dbReference>
<dbReference type="Reactome" id="R-GGA-1250342">
    <property type="pathway name" value="PI3K events in ERBB4 signaling"/>
</dbReference>
<dbReference type="Reactome" id="R-GGA-1250347">
    <property type="pathway name" value="SHC1 events in ERBB4 signaling"/>
</dbReference>
<dbReference type="Reactome" id="R-GGA-1257604">
    <property type="pathway name" value="PIP3 activates AKT signaling"/>
</dbReference>
<dbReference type="Reactome" id="R-GGA-177929">
    <property type="pathway name" value="Signaling by EGFR"/>
</dbReference>
<dbReference type="Reactome" id="R-GGA-179812">
    <property type="pathway name" value="GRB2 events in EGFR signaling"/>
</dbReference>
<dbReference type="Reactome" id="R-GGA-180292">
    <property type="pathway name" value="GAB1 signalosome"/>
</dbReference>
<dbReference type="Reactome" id="R-GGA-180336">
    <property type="pathway name" value="SHC1 events in EGFR signaling"/>
</dbReference>
<dbReference type="Reactome" id="R-GGA-182971">
    <property type="pathway name" value="EGFR downregulation"/>
</dbReference>
<dbReference type="Reactome" id="R-GGA-1963640">
    <property type="pathway name" value="GRB2 events in ERBB2 signaling"/>
</dbReference>
<dbReference type="Reactome" id="R-GGA-1963642">
    <property type="pathway name" value="PI3K events in ERBB2 signaling"/>
</dbReference>
<dbReference type="Reactome" id="R-GGA-212718">
    <property type="pathway name" value="EGFR interacts with phospholipase C-gamma"/>
</dbReference>
<dbReference type="Reactome" id="R-GGA-2179392">
    <property type="pathway name" value="EGFR Transactivation by Gastrin"/>
</dbReference>
<dbReference type="Reactome" id="R-GGA-5673001">
    <property type="pathway name" value="RAF/MAP kinase cascade"/>
</dbReference>
<dbReference type="Reactome" id="R-GGA-6785631">
    <property type="pathway name" value="ERBB2 Regulates Cell Motility"/>
</dbReference>
<dbReference type="Reactome" id="R-GGA-6811558">
    <property type="pathway name" value="PI5P, PP2A and IER3 Regulate PI3K/AKT Signaling"/>
</dbReference>
<dbReference type="Reactome" id="R-GGA-8856825">
    <property type="pathway name" value="Cargo recognition for clathrin-mediated endocytosis"/>
</dbReference>
<dbReference type="Reactome" id="R-GGA-8856828">
    <property type="pathway name" value="Clathrin-mediated endocytosis"/>
</dbReference>
<dbReference type="Reactome" id="R-GGA-8857538">
    <property type="pathway name" value="PTK6 promotes HIF1A stabilization"/>
</dbReference>
<dbReference type="Reactome" id="R-GGA-8863795">
    <property type="pathway name" value="Downregulation of ERBB2 signaling"/>
</dbReference>
<dbReference type="Reactome" id="R-GGA-9009391">
    <property type="pathway name" value="Extra-nuclear estrogen signaling"/>
</dbReference>
<dbReference type="PRO" id="PR:Q9W7C5"/>
<dbReference type="Proteomes" id="UP000000539">
    <property type="component" value="Chromosome 13"/>
</dbReference>
<dbReference type="Bgee" id="ENSGALG00000000949">
    <property type="expression patterns" value="Expressed in liver and 11 other cell types or tissues"/>
</dbReference>
<dbReference type="GO" id="GO:0009986">
    <property type="term" value="C:cell surface"/>
    <property type="evidence" value="ECO:0007669"/>
    <property type="project" value="Ensembl"/>
</dbReference>
<dbReference type="GO" id="GO:0005615">
    <property type="term" value="C:extracellular space"/>
    <property type="evidence" value="ECO:0000318"/>
    <property type="project" value="GO_Central"/>
</dbReference>
<dbReference type="GO" id="GO:0005886">
    <property type="term" value="C:plasma membrane"/>
    <property type="evidence" value="ECO:0000318"/>
    <property type="project" value="GO_Central"/>
</dbReference>
<dbReference type="GO" id="GO:0005154">
    <property type="term" value="F:epidermal growth factor receptor binding"/>
    <property type="evidence" value="ECO:0000318"/>
    <property type="project" value="GO_Central"/>
</dbReference>
<dbReference type="GO" id="GO:0008083">
    <property type="term" value="F:growth factor activity"/>
    <property type="evidence" value="ECO:0000318"/>
    <property type="project" value="GO_Central"/>
</dbReference>
<dbReference type="GO" id="GO:0008201">
    <property type="term" value="F:heparin binding"/>
    <property type="evidence" value="ECO:0000318"/>
    <property type="project" value="GO_Central"/>
</dbReference>
<dbReference type="GO" id="GO:0030297">
    <property type="term" value="F:transmembrane receptor protein tyrosine kinase activator activity"/>
    <property type="evidence" value="ECO:0007669"/>
    <property type="project" value="Ensembl"/>
</dbReference>
<dbReference type="GO" id="GO:0060326">
    <property type="term" value="P:cell chemotaxis"/>
    <property type="evidence" value="ECO:0007669"/>
    <property type="project" value="Ensembl"/>
</dbReference>
<dbReference type="GO" id="GO:0021545">
    <property type="term" value="P:cranial nerve development"/>
    <property type="evidence" value="ECO:0000315"/>
    <property type="project" value="UniProtKB"/>
</dbReference>
<dbReference type="GO" id="GO:0007173">
    <property type="term" value="P:epidermal growth factor receptor signaling pathway"/>
    <property type="evidence" value="ECO:0000318"/>
    <property type="project" value="GO_Central"/>
</dbReference>
<dbReference type="GO" id="GO:0038134">
    <property type="term" value="P:ERBB2-EGFR signaling pathway"/>
    <property type="evidence" value="ECO:0007669"/>
    <property type="project" value="Ensembl"/>
</dbReference>
<dbReference type="GO" id="GO:0038135">
    <property type="term" value="P:ERBB2-ERBB4 signaling pathway"/>
    <property type="evidence" value="ECO:0007669"/>
    <property type="project" value="Ensembl"/>
</dbReference>
<dbReference type="GO" id="GO:0008284">
    <property type="term" value="P:positive regulation of cell population proliferation"/>
    <property type="evidence" value="ECO:0000318"/>
    <property type="project" value="GO_Central"/>
</dbReference>
<dbReference type="GO" id="GO:0051549">
    <property type="term" value="P:positive regulation of keratinocyte migration"/>
    <property type="evidence" value="ECO:0007669"/>
    <property type="project" value="Ensembl"/>
</dbReference>
<dbReference type="GO" id="GO:0051897">
    <property type="term" value="P:positive regulation of phosphatidylinositol 3-kinase/protein kinase B signal transduction"/>
    <property type="evidence" value="ECO:0007669"/>
    <property type="project" value="Ensembl"/>
</dbReference>
<dbReference type="GO" id="GO:0048661">
    <property type="term" value="P:positive regulation of smooth muscle cell proliferation"/>
    <property type="evidence" value="ECO:0007669"/>
    <property type="project" value="Ensembl"/>
</dbReference>
<dbReference type="GO" id="GO:0090303">
    <property type="term" value="P:positive regulation of wound healing"/>
    <property type="evidence" value="ECO:0007669"/>
    <property type="project" value="Ensembl"/>
</dbReference>
<dbReference type="GO" id="GO:0008016">
    <property type="term" value="P:regulation of heart contraction"/>
    <property type="evidence" value="ECO:0007669"/>
    <property type="project" value="Ensembl"/>
</dbReference>
<dbReference type="GO" id="GO:0035313">
    <property type="term" value="P:wound healing, spreading of epidermal cells"/>
    <property type="evidence" value="ECO:0007669"/>
    <property type="project" value="Ensembl"/>
</dbReference>
<dbReference type="FunFam" id="2.10.25.10:FF:000158">
    <property type="entry name" value="proheparin-binding EGF-like growth factor"/>
    <property type="match status" value="1"/>
</dbReference>
<dbReference type="Gene3D" id="2.10.25.10">
    <property type="entry name" value="Laminin"/>
    <property type="match status" value="1"/>
</dbReference>
<dbReference type="InterPro" id="IPR000742">
    <property type="entry name" value="EGF-like_dom"/>
</dbReference>
<dbReference type="PANTHER" id="PTHR10740:SF4">
    <property type="entry name" value="PROHEPARIN-BINDING EGF-LIKE GROWTH FACTOR"/>
    <property type="match status" value="1"/>
</dbReference>
<dbReference type="PANTHER" id="PTHR10740">
    <property type="entry name" value="TRANSFORMING GROWTH FACTOR ALPHA"/>
    <property type="match status" value="1"/>
</dbReference>
<dbReference type="Pfam" id="PF00008">
    <property type="entry name" value="EGF"/>
    <property type="match status" value="1"/>
</dbReference>
<dbReference type="SUPFAM" id="SSF57196">
    <property type="entry name" value="EGF/Laminin"/>
    <property type="match status" value="1"/>
</dbReference>
<dbReference type="PROSITE" id="PS00022">
    <property type="entry name" value="EGF_1"/>
    <property type="match status" value="1"/>
</dbReference>
<dbReference type="PROSITE" id="PS01186">
    <property type="entry name" value="EGF_2"/>
    <property type="match status" value="1"/>
</dbReference>
<dbReference type="PROSITE" id="PS50026">
    <property type="entry name" value="EGF_3"/>
    <property type="match status" value="1"/>
</dbReference>
<comment type="function">
    <text evidence="1 5 6">May be involved in macrophage-mediated cellular proliferation. It is mitogenic for fibroblasts and smooth muscle but not endothelial cells. It is able to bind EGF receptor/EGFR with higher affinity than EGF itself and is a far more potent mitogen for smooth muscle cells than EGF (By similarity). Plays an important role in the proper development of cranial nerves by inhibiting the migration of the cranial neural crest cells (NCCs) into the odd-numbered neuromeres (r3 and r5) of the hindbrain Plays a role in mediating v-Jun-induced oncogenic transformation.</text>
</comment>
<comment type="subunit">
    <text>Interacts with CNIH2.</text>
</comment>
<comment type="subcellular location">
    <molecule>Heparin-binding EGF-like growth factor</molecule>
    <subcellularLocation>
        <location evidence="1">Secreted</location>
        <location evidence="1">Extracellular space</location>
    </subcellularLocation>
    <text evidence="1">Mature HB-EGF is released into the extracellular space and probably binds to a receptor.</text>
</comment>
<comment type="subcellular location">
    <molecule>Proheparin-binding EGF-like growth factor</molecule>
    <subcellularLocation>
        <location evidence="1">Cell membrane</location>
        <topology evidence="1">Single-pass type I membrane protein</topology>
    </subcellularLocation>
</comment>
<comment type="developmental stage">
    <text evidence="6">Expressed uniformly in the embryonic hindbrain.</text>
</comment>
<comment type="induction">
    <text evidence="5">Strongly induced in embryonic fibroblasts transformed by v-Jun.</text>
</comment>
<reference key="1">
    <citation type="journal article" date="1999" name="Proc. Natl. Acad. Sci. U.S.A.">
        <title>Heparin-binding epidermal growth factor-like growth factor, a v-Jun target gene, induces oncogenic transformation.</title>
        <authorList>
            <person name="Fu S."/>
            <person name="Bottoli I."/>
            <person name="Goller M."/>
            <person name="Vogt P.K."/>
        </authorList>
    </citation>
    <scope>NUCLEOTIDE SEQUENCE [MRNA]</scope>
    <scope>FUNCTION</scope>
    <scope>INDUCTION</scope>
    <source>
        <strain>White leghorn</strain>
    </source>
</reference>
<reference key="2">
    <citation type="journal article" date="2007" name="Mol. Biol. Cell">
        <title>Cornichon-like protein facilitates secretion of HB-EGF and regulates proper development of cranial nerves.</title>
        <authorList>
            <person name="Hoshino H."/>
            <person name="Uchida T."/>
            <person name="Otsuki T."/>
            <person name="Kawamoto S."/>
            <person name="Okubo K."/>
            <person name="Takeichi M."/>
            <person name="Chisaka O."/>
        </authorList>
    </citation>
    <scope>FUNCTION INTERACTION WITH CNIH2</scope>
    <scope>DEVELOPMENTAL STAGE</scope>
</reference>
<sequence>MDGRVVLIHALLTAVCSAAVGKFGRDGPHGEALHNEVLLHEGGGVASVSATAPLLGGIVEKEGGGAASGDALSELPRVAFLSKPQGPVTPKKKGNGNKRRKGKGLGKKRDPCLRKYKDFCIHGECKYIRELGAPSCICQPGYHGERCHGLLLPVEHPPSTYDHTTALAVVAVVLSSLCLVIITALLMFRCHKRGVYDVENEEKIKLGITVNH</sequence>
<proteinExistence type="evidence at protein level"/>
<feature type="signal peptide" evidence="2">
    <location>
        <begin position="1"/>
        <end position="18"/>
    </location>
</feature>
<feature type="chain" id="PRO_0000408979" description="Proheparin-binding EGF-like growth factor">
    <location>
        <begin position="19"/>
        <end position="212"/>
    </location>
</feature>
<feature type="chain" id="PRO_0000408980" description="Heparin-binding EGF-like growth factor">
    <location>
        <begin status="unknown"/>
        <end position="152"/>
    </location>
</feature>
<feature type="propeptide" id="PRO_0000408981" description="C-terminal" evidence="1">
    <location>
        <begin position="153"/>
        <end position="212"/>
    </location>
</feature>
<feature type="topological domain" description="Extracellular" evidence="2">
    <location>
        <begin position="19"/>
        <end position="167"/>
    </location>
</feature>
<feature type="transmembrane region" description="Helical" evidence="2">
    <location>
        <begin position="168"/>
        <end position="188"/>
    </location>
</feature>
<feature type="topological domain" description="Cytoplasmic" evidence="2">
    <location>
        <begin position="189"/>
        <end position="212"/>
    </location>
</feature>
<feature type="domain" description="EGF-like" evidence="3">
    <location>
        <begin position="108"/>
        <end position="148"/>
    </location>
</feature>
<feature type="region of interest" description="Disordered" evidence="4">
    <location>
        <begin position="82"/>
        <end position="108"/>
    </location>
</feature>
<feature type="compositionally biased region" description="Basic residues" evidence="4">
    <location>
        <begin position="90"/>
        <end position="106"/>
    </location>
</feature>
<feature type="disulfide bond" evidence="3">
    <location>
        <begin position="112"/>
        <end position="125"/>
    </location>
</feature>
<feature type="disulfide bond" evidence="3">
    <location>
        <begin position="120"/>
        <end position="136"/>
    </location>
</feature>
<feature type="disulfide bond" evidence="3">
    <location>
        <begin position="138"/>
        <end position="147"/>
    </location>
</feature>
<name>HBEGF_CHICK</name>